<evidence type="ECO:0000255" key="1">
    <source>
        <dbReference type="HAMAP-Rule" id="MF_00145"/>
    </source>
</evidence>
<proteinExistence type="inferred from homology"/>
<accession>B8D7Y0</accession>
<reference key="1">
    <citation type="journal article" date="2009" name="Science">
        <title>The dynamics and time scale of ongoing genomic erosion in symbiotic bacteria.</title>
        <authorList>
            <person name="Moran N.A."/>
            <person name="McLaughlin H.J."/>
            <person name="Sorek R."/>
        </authorList>
    </citation>
    <scope>NUCLEOTIDE SEQUENCE [LARGE SCALE GENOMIC DNA]</scope>
    <source>
        <strain>Tuc7</strain>
    </source>
</reference>
<feature type="chain" id="PRO_1000192812" description="Phosphoglycerate kinase">
    <location>
        <begin position="1"/>
        <end position="390"/>
    </location>
</feature>
<feature type="binding site" evidence="1">
    <location>
        <begin position="21"/>
        <end position="23"/>
    </location>
    <ligand>
        <name>substrate</name>
    </ligand>
</feature>
<feature type="binding site" evidence="1">
    <location>
        <position position="36"/>
    </location>
    <ligand>
        <name>substrate</name>
    </ligand>
</feature>
<feature type="binding site" evidence="1">
    <location>
        <begin position="59"/>
        <end position="62"/>
    </location>
    <ligand>
        <name>substrate</name>
    </ligand>
</feature>
<feature type="binding site" evidence="1">
    <location>
        <position position="114"/>
    </location>
    <ligand>
        <name>substrate</name>
    </ligand>
</feature>
<feature type="binding site" evidence="1">
    <location>
        <position position="147"/>
    </location>
    <ligand>
        <name>substrate</name>
    </ligand>
</feature>
<feature type="binding site" evidence="1">
    <location>
        <position position="198"/>
    </location>
    <ligand>
        <name>ATP</name>
        <dbReference type="ChEBI" id="CHEBI:30616"/>
    </ligand>
</feature>
<feature type="binding site" evidence="1">
    <location>
        <position position="314"/>
    </location>
    <ligand>
        <name>ATP</name>
        <dbReference type="ChEBI" id="CHEBI:30616"/>
    </ligand>
</feature>
<feature type="binding site" evidence="1">
    <location>
        <begin position="340"/>
        <end position="343"/>
    </location>
    <ligand>
        <name>ATP</name>
        <dbReference type="ChEBI" id="CHEBI:30616"/>
    </ligand>
</feature>
<keyword id="KW-0067">ATP-binding</keyword>
<keyword id="KW-0963">Cytoplasm</keyword>
<keyword id="KW-0324">Glycolysis</keyword>
<keyword id="KW-0418">Kinase</keyword>
<keyword id="KW-0547">Nucleotide-binding</keyword>
<keyword id="KW-0808">Transferase</keyword>
<sequence length="390" mass="43653">MTIRKMTELNITEKRILIRSDLNVPIENGIIQSDARILAALPTIELALQKKAKVIIMSHLGRPKEGYYTKKYSLFPIFEYFKKKFNNTKIYFSNNFLDGIKLNPGEIALLENTRFNKGELNNDEQLSKKYSDLCDIFVMDAFGSAHRMQSSTYGIGKFVKIACAGLLLISEIDALKKALKKPKRPMVAIVGGSKVSTKFNVLNKLSKIADTIIVGGGIANTFLAIDYKIGKSLYEPDFVFEAKKLRDKYNIIVPIDSRVGKNFCKNEQAIIKSPDNIKEDEEIMDFGDESIKKIISIITQSQTIMWNGPVGVFEFPNFRKGTEMIAKTIANSNAFSIAGGGDTLSVIDMFNIKNNISYISTGGGAFLEFIEGKKLPAIQMLEENFKNKSK</sequence>
<gene>
    <name evidence="1" type="primary">pgk</name>
    <name type="ordered locus">BUAPTUC7_444</name>
</gene>
<comment type="catalytic activity">
    <reaction evidence="1">
        <text>(2R)-3-phosphoglycerate + ATP = (2R)-3-phospho-glyceroyl phosphate + ADP</text>
        <dbReference type="Rhea" id="RHEA:14801"/>
        <dbReference type="ChEBI" id="CHEBI:30616"/>
        <dbReference type="ChEBI" id="CHEBI:57604"/>
        <dbReference type="ChEBI" id="CHEBI:58272"/>
        <dbReference type="ChEBI" id="CHEBI:456216"/>
        <dbReference type="EC" id="2.7.2.3"/>
    </reaction>
</comment>
<comment type="pathway">
    <text evidence="1">Carbohydrate degradation; glycolysis; pyruvate from D-glyceraldehyde 3-phosphate: step 2/5.</text>
</comment>
<comment type="subunit">
    <text evidence="1">Monomer.</text>
</comment>
<comment type="subcellular location">
    <subcellularLocation>
        <location evidence="1">Cytoplasm</location>
    </subcellularLocation>
</comment>
<comment type="similarity">
    <text evidence="1">Belongs to the phosphoglycerate kinase family.</text>
</comment>
<name>PGK_BUCAT</name>
<protein>
    <recommendedName>
        <fullName evidence="1">Phosphoglycerate kinase</fullName>
        <ecNumber evidence="1">2.7.2.3</ecNumber>
    </recommendedName>
</protein>
<dbReference type="EC" id="2.7.2.3" evidence="1"/>
<dbReference type="EMBL" id="CP001158">
    <property type="protein sequence ID" value="ACL30245.1"/>
    <property type="molecule type" value="Genomic_DNA"/>
</dbReference>
<dbReference type="RefSeq" id="WP_010896123.1">
    <property type="nucleotide sequence ID" value="NC_011834.1"/>
</dbReference>
<dbReference type="SMR" id="B8D7Y0"/>
<dbReference type="KEGG" id="bau:BUAPTUC7_444"/>
<dbReference type="HOGENOM" id="CLU_025427_0_2_6"/>
<dbReference type="UniPathway" id="UPA00109">
    <property type="reaction ID" value="UER00185"/>
</dbReference>
<dbReference type="GO" id="GO:0005829">
    <property type="term" value="C:cytosol"/>
    <property type="evidence" value="ECO:0007669"/>
    <property type="project" value="TreeGrafter"/>
</dbReference>
<dbReference type="GO" id="GO:0043531">
    <property type="term" value="F:ADP binding"/>
    <property type="evidence" value="ECO:0007669"/>
    <property type="project" value="TreeGrafter"/>
</dbReference>
<dbReference type="GO" id="GO:0005524">
    <property type="term" value="F:ATP binding"/>
    <property type="evidence" value="ECO:0007669"/>
    <property type="project" value="UniProtKB-KW"/>
</dbReference>
<dbReference type="GO" id="GO:0004618">
    <property type="term" value="F:phosphoglycerate kinase activity"/>
    <property type="evidence" value="ECO:0007669"/>
    <property type="project" value="UniProtKB-UniRule"/>
</dbReference>
<dbReference type="GO" id="GO:0006094">
    <property type="term" value="P:gluconeogenesis"/>
    <property type="evidence" value="ECO:0007669"/>
    <property type="project" value="TreeGrafter"/>
</dbReference>
<dbReference type="GO" id="GO:0006096">
    <property type="term" value="P:glycolytic process"/>
    <property type="evidence" value="ECO:0007669"/>
    <property type="project" value="UniProtKB-UniRule"/>
</dbReference>
<dbReference type="FunFam" id="3.40.50.1260:FF:000002">
    <property type="entry name" value="Phosphoglycerate kinase"/>
    <property type="match status" value="1"/>
</dbReference>
<dbReference type="FunFam" id="3.40.50.1260:FF:000031">
    <property type="entry name" value="Phosphoglycerate kinase 1"/>
    <property type="match status" value="1"/>
</dbReference>
<dbReference type="Gene3D" id="3.40.50.1260">
    <property type="entry name" value="Phosphoglycerate kinase, N-terminal domain"/>
    <property type="match status" value="2"/>
</dbReference>
<dbReference type="HAMAP" id="MF_00145">
    <property type="entry name" value="Phosphoglyc_kinase"/>
    <property type="match status" value="1"/>
</dbReference>
<dbReference type="InterPro" id="IPR001576">
    <property type="entry name" value="Phosphoglycerate_kinase"/>
</dbReference>
<dbReference type="InterPro" id="IPR015824">
    <property type="entry name" value="Phosphoglycerate_kinase_N"/>
</dbReference>
<dbReference type="InterPro" id="IPR036043">
    <property type="entry name" value="Phosphoglycerate_kinase_sf"/>
</dbReference>
<dbReference type="PANTHER" id="PTHR11406">
    <property type="entry name" value="PHOSPHOGLYCERATE KINASE"/>
    <property type="match status" value="1"/>
</dbReference>
<dbReference type="PANTHER" id="PTHR11406:SF23">
    <property type="entry name" value="PHOSPHOGLYCERATE KINASE 1, CHLOROPLASTIC-RELATED"/>
    <property type="match status" value="1"/>
</dbReference>
<dbReference type="Pfam" id="PF00162">
    <property type="entry name" value="PGK"/>
    <property type="match status" value="1"/>
</dbReference>
<dbReference type="PIRSF" id="PIRSF000724">
    <property type="entry name" value="Pgk"/>
    <property type="match status" value="1"/>
</dbReference>
<dbReference type="PRINTS" id="PR00477">
    <property type="entry name" value="PHGLYCKINASE"/>
</dbReference>
<dbReference type="SUPFAM" id="SSF53748">
    <property type="entry name" value="Phosphoglycerate kinase"/>
    <property type="match status" value="1"/>
</dbReference>
<organism>
    <name type="scientific">Buchnera aphidicola subsp. Acyrthosiphon pisum (strain Tuc7)</name>
    <dbReference type="NCBI Taxonomy" id="561501"/>
    <lineage>
        <taxon>Bacteria</taxon>
        <taxon>Pseudomonadati</taxon>
        <taxon>Pseudomonadota</taxon>
        <taxon>Gammaproteobacteria</taxon>
        <taxon>Enterobacterales</taxon>
        <taxon>Erwiniaceae</taxon>
        <taxon>Buchnera</taxon>
    </lineage>
</organism>